<reference key="1">
    <citation type="journal article" date="2004" name="Environ. Microbiol.">
        <title>The genome of Desulfotalea psychrophila, a sulfate-reducing bacterium from permanently cold Arctic sediments.</title>
        <authorList>
            <person name="Rabus R."/>
            <person name="Ruepp A."/>
            <person name="Frickey T."/>
            <person name="Rattei T."/>
            <person name="Fartmann B."/>
            <person name="Stark M."/>
            <person name="Bauer M."/>
            <person name="Zibat A."/>
            <person name="Lombardot T."/>
            <person name="Becker I."/>
            <person name="Amann J."/>
            <person name="Gellner K."/>
            <person name="Teeling H."/>
            <person name="Leuschner W.D."/>
            <person name="Gloeckner F.-O."/>
            <person name="Lupas A.N."/>
            <person name="Amann R."/>
            <person name="Klenk H.-P."/>
        </authorList>
    </citation>
    <scope>NUCLEOTIDE SEQUENCE [LARGE SCALE GENOMIC DNA]</scope>
    <source>
        <strain>DSM 12343 / LSv54</strain>
    </source>
</reference>
<evidence type="ECO:0000255" key="1">
    <source>
        <dbReference type="HAMAP-Rule" id="MF_00054"/>
    </source>
</evidence>
<comment type="function">
    <text evidence="1">Catalyzes the GTP-dependent ribosomal translocation step during translation elongation. During this step, the ribosome changes from the pre-translocational (PRE) to the post-translocational (POST) state as the newly formed A-site-bound peptidyl-tRNA and P-site-bound deacylated tRNA move to the P and E sites, respectively. Catalyzes the coordinated movement of the two tRNA molecules, the mRNA and conformational changes in the ribosome.</text>
</comment>
<comment type="subcellular location">
    <subcellularLocation>
        <location evidence="1">Cytoplasm</location>
    </subcellularLocation>
</comment>
<comment type="similarity">
    <text evidence="1">Belongs to the TRAFAC class translation factor GTPase superfamily. Classic translation factor GTPase family. EF-G/EF-2 subfamily.</text>
</comment>
<protein>
    <recommendedName>
        <fullName evidence="1">Elongation factor G 2</fullName>
        <shortName evidence="1">EF-G 2</shortName>
    </recommendedName>
</protein>
<keyword id="KW-0963">Cytoplasm</keyword>
<keyword id="KW-0251">Elongation factor</keyword>
<keyword id="KW-0342">GTP-binding</keyword>
<keyword id="KW-0547">Nucleotide-binding</keyword>
<keyword id="KW-0648">Protein biosynthesis</keyword>
<keyword id="KW-1185">Reference proteome</keyword>
<gene>
    <name evidence="1" type="primary">fusA2</name>
    <name type="ordered locus">DP1121</name>
</gene>
<name>EFG2_DESPS</name>
<accession>Q6AP74</accession>
<organism>
    <name type="scientific">Desulfotalea psychrophila (strain LSv54 / DSM 12343)</name>
    <dbReference type="NCBI Taxonomy" id="177439"/>
    <lineage>
        <taxon>Bacteria</taxon>
        <taxon>Pseudomonadati</taxon>
        <taxon>Thermodesulfobacteriota</taxon>
        <taxon>Desulfobulbia</taxon>
        <taxon>Desulfobulbales</taxon>
        <taxon>Desulfocapsaceae</taxon>
        <taxon>Desulfotalea</taxon>
    </lineage>
</organism>
<sequence length="692" mass="75954">MVAQINLKDVRNIGIMAHIDAGKTTTTERILYYTGRSHKIGEVHDGNAVMDWMEQEQERGITITSAATTCIWKGKKINIIDTPGHVDFTVEVERSLRVLDGVVAVFCAVGGVEPQSETVWRQANKYFIPRVAFINKMDRVGADFDHCLAMIEKRLRANPVAVQIPVGSEAEFAGVIDLIEGEMYAFDDATLGQEVERREVPTEYKERFTAARISLLEKLADFDEELMEKFLDDELISSATIYKALRKATLALELVPVFCGSAFKNKGVQPLLDGVVNYLPSPLDVKPVEGVDKDGVEVSRKADPSEKFAGLVFKLMSDSFVENLAFIRVYSGTLKQGDKVFNPIKGKQEKIGKLLRLHANKREEVKEIVAGDIGAVVGLKFTTTGDTLCEKEAQIILESMEFPDPVIGVAIEPSSKADEKKLTESLAKIALEDPSFVVSQNEDTGQTIISGMGELHLEIIVYRLLNEFKVAARVGTPQVSYKESIQRSHSAEGLFEQPTGSSNQFAKVVLEIEPLERGAGIEFVCEVDEKQIPAEFLGAVERGVVDSLDSGPLVGYPVTDVRVRLVGGAYHEEDSTEMAFGVSASIAVRKAASEADSVLLEPIMSLEVITPDEYLGDAIGDLNKKRAKVVGVEVEGDLQKLLAHVPLSEMFGYSTSLRSATQGRANFTMQFLAYDVVPANKAETIIKKIRGI</sequence>
<proteinExistence type="inferred from homology"/>
<feature type="chain" id="PRO_0000091117" description="Elongation factor G 2">
    <location>
        <begin position="1"/>
        <end position="692"/>
    </location>
</feature>
<feature type="domain" description="tr-type G">
    <location>
        <begin position="8"/>
        <end position="283"/>
    </location>
</feature>
<feature type="binding site" evidence="1">
    <location>
        <begin position="17"/>
        <end position="24"/>
    </location>
    <ligand>
        <name>GTP</name>
        <dbReference type="ChEBI" id="CHEBI:37565"/>
    </ligand>
</feature>
<feature type="binding site" evidence="1">
    <location>
        <begin position="81"/>
        <end position="85"/>
    </location>
    <ligand>
        <name>GTP</name>
        <dbReference type="ChEBI" id="CHEBI:37565"/>
    </ligand>
</feature>
<feature type="binding site" evidence="1">
    <location>
        <begin position="135"/>
        <end position="138"/>
    </location>
    <ligand>
        <name>GTP</name>
        <dbReference type="ChEBI" id="CHEBI:37565"/>
    </ligand>
</feature>
<dbReference type="EMBL" id="CR522870">
    <property type="protein sequence ID" value="CAG35850.1"/>
    <property type="molecule type" value="Genomic_DNA"/>
</dbReference>
<dbReference type="RefSeq" id="WP_011188364.1">
    <property type="nucleotide sequence ID" value="NC_006138.1"/>
</dbReference>
<dbReference type="SMR" id="Q6AP74"/>
<dbReference type="STRING" id="177439.DP1121"/>
<dbReference type="KEGG" id="dps:DP1121"/>
<dbReference type="eggNOG" id="COG0480">
    <property type="taxonomic scope" value="Bacteria"/>
</dbReference>
<dbReference type="HOGENOM" id="CLU_002794_4_1_7"/>
<dbReference type="OrthoDB" id="9760518at2"/>
<dbReference type="Proteomes" id="UP000000602">
    <property type="component" value="Chromosome"/>
</dbReference>
<dbReference type="GO" id="GO:0005737">
    <property type="term" value="C:cytoplasm"/>
    <property type="evidence" value="ECO:0007669"/>
    <property type="project" value="UniProtKB-SubCell"/>
</dbReference>
<dbReference type="GO" id="GO:0005525">
    <property type="term" value="F:GTP binding"/>
    <property type="evidence" value="ECO:0007669"/>
    <property type="project" value="UniProtKB-UniRule"/>
</dbReference>
<dbReference type="GO" id="GO:0003924">
    <property type="term" value="F:GTPase activity"/>
    <property type="evidence" value="ECO:0007669"/>
    <property type="project" value="InterPro"/>
</dbReference>
<dbReference type="GO" id="GO:0003746">
    <property type="term" value="F:translation elongation factor activity"/>
    <property type="evidence" value="ECO:0007669"/>
    <property type="project" value="UniProtKB-UniRule"/>
</dbReference>
<dbReference type="GO" id="GO:0032790">
    <property type="term" value="P:ribosome disassembly"/>
    <property type="evidence" value="ECO:0007669"/>
    <property type="project" value="TreeGrafter"/>
</dbReference>
<dbReference type="CDD" id="cd01886">
    <property type="entry name" value="EF-G"/>
    <property type="match status" value="1"/>
</dbReference>
<dbReference type="CDD" id="cd16262">
    <property type="entry name" value="EFG_III"/>
    <property type="match status" value="1"/>
</dbReference>
<dbReference type="CDD" id="cd01680">
    <property type="entry name" value="EFG_like_IV"/>
    <property type="match status" value="1"/>
</dbReference>
<dbReference type="CDD" id="cd03713">
    <property type="entry name" value="EFG_mtEFG_C"/>
    <property type="match status" value="1"/>
</dbReference>
<dbReference type="CDD" id="cd04088">
    <property type="entry name" value="EFG_mtEFG_II"/>
    <property type="match status" value="1"/>
</dbReference>
<dbReference type="FunFam" id="2.40.30.10:FF:000006">
    <property type="entry name" value="Elongation factor G"/>
    <property type="match status" value="1"/>
</dbReference>
<dbReference type="FunFam" id="3.30.70.240:FF:000001">
    <property type="entry name" value="Elongation factor G"/>
    <property type="match status" value="1"/>
</dbReference>
<dbReference type="FunFam" id="3.30.70.870:FF:000001">
    <property type="entry name" value="Elongation factor G"/>
    <property type="match status" value="1"/>
</dbReference>
<dbReference type="FunFam" id="3.40.50.300:FF:000029">
    <property type="entry name" value="Elongation factor G"/>
    <property type="match status" value="1"/>
</dbReference>
<dbReference type="Gene3D" id="3.30.230.10">
    <property type="match status" value="1"/>
</dbReference>
<dbReference type="Gene3D" id="3.30.70.240">
    <property type="match status" value="1"/>
</dbReference>
<dbReference type="Gene3D" id="3.30.70.870">
    <property type="entry name" value="Elongation Factor G (Translational Gtpase), domain 3"/>
    <property type="match status" value="1"/>
</dbReference>
<dbReference type="Gene3D" id="3.40.50.300">
    <property type="entry name" value="P-loop containing nucleotide triphosphate hydrolases"/>
    <property type="match status" value="1"/>
</dbReference>
<dbReference type="Gene3D" id="2.40.30.10">
    <property type="entry name" value="Translation factors"/>
    <property type="match status" value="1"/>
</dbReference>
<dbReference type="HAMAP" id="MF_00054_B">
    <property type="entry name" value="EF_G_EF_2_B"/>
    <property type="match status" value="1"/>
</dbReference>
<dbReference type="InterPro" id="IPR053905">
    <property type="entry name" value="EF-G-like_DII"/>
</dbReference>
<dbReference type="InterPro" id="IPR041095">
    <property type="entry name" value="EFG_II"/>
</dbReference>
<dbReference type="InterPro" id="IPR009022">
    <property type="entry name" value="EFG_III"/>
</dbReference>
<dbReference type="InterPro" id="IPR035647">
    <property type="entry name" value="EFG_III/V"/>
</dbReference>
<dbReference type="InterPro" id="IPR035649">
    <property type="entry name" value="EFG_V"/>
</dbReference>
<dbReference type="InterPro" id="IPR000640">
    <property type="entry name" value="EFG_V-like"/>
</dbReference>
<dbReference type="InterPro" id="IPR031157">
    <property type="entry name" value="G_TR_CS"/>
</dbReference>
<dbReference type="InterPro" id="IPR027417">
    <property type="entry name" value="P-loop_NTPase"/>
</dbReference>
<dbReference type="InterPro" id="IPR020568">
    <property type="entry name" value="Ribosomal_Su5_D2-typ_SF"/>
</dbReference>
<dbReference type="InterPro" id="IPR014721">
    <property type="entry name" value="Ribsml_uS5_D2-typ_fold_subgr"/>
</dbReference>
<dbReference type="InterPro" id="IPR005225">
    <property type="entry name" value="Small_GTP-bd"/>
</dbReference>
<dbReference type="InterPro" id="IPR000795">
    <property type="entry name" value="T_Tr_GTP-bd_dom"/>
</dbReference>
<dbReference type="InterPro" id="IPR009000">
    <property type="entry name" value="Transl_B-barrel_sf"/>
</dbReference>
<dbReference type="InterPro" id="IPR004540">
    <property type="entry name" value="Transl_elong_EFG/EF2"/>
</dbReference>
<dbReference type="InterPro" id="IPR005517">
    <property type="entry name" value="Transl_elong_EFG/EF2_IV"/>
</dbReference>
<dbReference type="NCBIfam" id="TIGR00484">
    <property type="entry name" value="EF-G"/>
    <property type="match status" value="1"/>
</dbReference>
<dbReference type="NCBIfam" id="NF009381">
    <property type="entry name" value="PRK12740.1-5"/>
    <property type="match status" value="1"/>
</dbReference>
<dbReference type="NCBIfam" id="TIGR00231">
    <property type="entry name" value="small_GTP"/>
    <property type="match status" value="1"/>
</dbReference>
<dbReference type="PANTHER" id="PTHR43261:SF1">
    <property type="entry name" value="RIBOSOME-RELEASING FACTOR 2, MITOCHONDRIAL"/>
    <property type="match status" value="1"/>
</dbReference>
<dbReference type="PANTHER" id="PTHR43261">
    <property type="entry name" value="TRANSLATION ELONGATION FACTOR G-RELATED"/>
    <property type="match status" value="1"/>
</dbReference>
<dbReference type="Pfam" id="PF22042">
    <property type="entry name" value="EF-G_D2"/>
    <property type="match status" value="1"/>
</dbReference>
<dbReference type="Pfam" id="PF00679">
    <property type="entry name" value="EFG_C"/>
    <property type="match status" value="1"/>
</dbReference>
<dbReference type="Pfam" id="PF14492">
    <property type="entry name" value="EFG_III"/>
    <property type="match status" value="1"/>
</dbReference>
<dbReference type="Pfam" id="PF03764">
    <property type="entry name" value="EFG_IV"/>
    <property type="match status" value="1"/>
</dbReference>
<dbReference type="Pfam" id="PF00009">
    <property type="entry name" value="GTP_EFTU"/>
    <property type="match status" value="1"/>
</dbReference>
<dbReference type="PRINTS" id="PR00315">
    <property type="entry name" value="ELONGATNFCT"/>
</dbReference>
<dbReference type="SMART" id="SM00838">
    <property type="entry name" value="EFG_C"/>
    <property type="match status" value="1"/>
</dbReference>
<dbReference type="SMART" id="SM00889">
    <property type="entry name" value="EFG_IV"/>
    <property type="match status" value="1"/>
</dbReference>
<dbReference type="SUPFAM" id="SSF54980">
    <property type="entry name" value="EF-G C-terminal domain-like"/>
    <property type="match status" value="2"/>
</dbReference>
<dbReference type="SUPFAM" id="SSF52540">
    <property type="entry name" value="P-loop containing nucleoside triphosphate hydrolases"/>
    <property type="match status" value="1"/>
</dbReference>
<dbReference type="SUPFAM" id="SSF54211">
    <property type="entry name" value="Ribosomal protein S5 domain 2-like"/>
    <property type="match status" value="1"/>
</dbReference>
<dbReference type="SUPFAM" id="SSF50447">
    <property type="entry name" value="Translation proteins"/>
    <property type="match status" value="1"/>
</dbReference>
<dbReference type="PROSITE" id="PS00301">
    <property type="entry name" value="G_TR_1"/>
    <property type="match status" value="1"/>
</dbReference>
<dbReference type="PROSITE" id="PS51722">
    <property type="entry name" value="G_TR_2"/>
    <property type="match status" value="1"/>
</dbReference>